<reference key="1">
    <citation type="journal article" date="2000" name="Nucleic Acids Res.">
        <title>Genome sequences of Chlamydia trachomatis MoPn and Chlamydia pneumoniae AR39.</title>
        <authorList>
            <person name="Read T.D."/>
            <person name="Brunham R.C."/>
            <person name="Shen C."/>
            <person name="Gill S.R."/>
            <person name="Heidelberg J.F."/>
            <person name="White O."/>
            <person name="Hickey E.K."/>
            <person name="Peterson J.D."/>
            <person name="Utterback T.R."/>
            <person name="Berry K.J."/>
            <person name="Bass S."/>
            <person name="Linher K.D."/>
            <person name="Weidman J.F."/>
            <person name="Khouri H.M."/>
            <person name="Craven B."/>
            <person name="Bowman C."/>
            <person name="Dodson R.J."/>
            <person name="Gwinn M.L."/>
            <person name="Nelson W.C."/>
            <person name="DeBoy R.T."/>
            <person name="Kolonay J.F."/>
            <person name="McClarty G."/>
            <person name="Salzberg S.L."/>
            <person name="Eisen J.A."/>
            <person name="Fraser C.M."/>
        </authorList>
    </citation>
    <scope>NUCLEOTIDE SEQUENCE [LARGE SCALE GENOMIC DNA]</scope>
    <source>
        <strain>MoPn / Nigg</strain>
    </source>
</reference>
<keyword id="KW-0067">ATP-binding</keyword>
<keyword id="KW-0289">Folate biosynthesis</keyword>
<keyword id="KW-0418">Kinase</keyword>
<keyword id="KW-0460">Magnesium</keyword>
<keyword id="KW-0479">Metal-binding</keyword>
<keyword id="KW-0511">Multifunctional enzyme</keyword>
<keyword id="KW-0547">Nucleotide-binding</keyword>
<keyword id="KW-0808">Transferase</keyword>
<feature type="chain" id="PRO_0000168239" description="Folate synthesis bifunctional protein">
    <location>
        <begin position="1"/>
        <end position="450"/>
    </location>
</feature>
<feature type="domain" description="Pterin-binding" evidence="3">
    <location>
        <begin position="180"/>
        <end position="441"/>
    </location>
</feature>
<feature type="region of interest" description="HPPK">
    <location>
        <begin position="1"/>
        <end position="166"/>
    </location>
</feature>
<feature type="region of interest" description="DHPS">
    <location>
        <begin position="182"/>
        <end position="450"/>
    </location>
</feature>
<feature type="binding site" evidence="2">
    <location>
        <position position="187"/>
    </location>
    <ligand>
        <name>Mg(2+)</name>
        <dbReference type="ChEBI" id="CHEBI:18420"/>
    </ligand>
</feature>
<feature type="binding site" evidence="1">
    <location>
        <position position="227"/>
    </location>
    <ligand>
        <name>(7,8-dihydropterin-6-yl)methyl diphosphate</name>
        <dbReference type="ChEBI" id="CHEBI:72950"/>
    </ligand>
</feature>
<feature type="binding site" evidence="1">
    <location>
        <position position="267"/>
    </location>
    <ligand>
        <name>(7,8-dihydropterin-6-yl)methyl diphosphate</name>
        <dbReference type="ChEBI" id="CHEBI:72950"/>
    </ligand>
</feature>
<feature type="binding site" evidence="1">
    <location>
        <position position="287"/>
    </location>
    <ligand>
        <name>(7,8-dihydropterin-6-yl)methyl diphosphate</name>
        <dbReference type="ChEBI" id="CHEBI:72950"/>
    </ligand>
</feature>
<feature type="binding site" evidence="1">
    <location>
        <position position="358"/>
    </location>
    <ligand>
        <name>(7,8-dihydropterin-6-yl)methyl diphosphate</name>
        <dbReference type="ChEBI" id="CHEBI:72950"/>
    </ligand>
</feature>
<feature type="binding site" evidence="1">
    <location>
        <position position="395"/>
    </location>
    <ligand>
        <name>(7,8-dihydropterin-6-yl)methyl diphosphate</name>
        <dbReference type="ChEBI" id="CHEBI:72950"/>
    </ligand>
</feature>
<feature type="binding site" evidence="1">
    <location>
        <begin position="429"/>
        <end position="431"/>
    </location>
    <ligand>
        <name>(7,8-dihydropterin-6-yl)methyl diphosphate</name>
        <dbReference type="ChEBI" id="CHEBI:72950"/>
    </ligand>
</feature>
<dbReference type="EC" id="2.7.6.3"/>
<dbReference type="EC" id="2.5.1.15"/>
<dbReference type="EMBL" id="AE002160">
    <property type="protein sequence ID" value="AAF39696.1"/>
    <property type="molecule type" value="Genomic_DNA"/>
</dbReference>
<dbReference type="PIR" id="G81652">
    <property type="entry name" value="G81652"/>
</dbReference>
<dbReference type="SMR" id="P82602"/>
<dbReference type="GeneID" id="1246272"/>
<dbReference type="KEGG" id="cmu:TC_0903"/>
<dbReference type="eggNOG" id="COG0294">
    <property type="taxonomic scope" value="Bacteria"/>
</dbReference>
<dbReference type="eggNOG" id="COG0801">
    <property type="taxonomic scope" value="Bacteria"/>
</dbReference>
<dbReference type="HOGENOM" id="CLU_008023_2_2_0"/>
<dbReference type="OrthoDB" id="9811744at2"/>
<dbReference type="UniPathway" id="UPA00077">
    <property type="reaction ID" value="UER00155"/>
</dbReference>
<dbReference type="UniPathway" id="UPA00077">
    <property type="reaction ID" value="UER00156"/>
</dbReference>
<dbReference type="Proteomes" id="UP000000800">
    <property type="component" value="Chromosome"/>
</dbReference>
<dbReference type="GO" id="GO:0005829">
    <property type="term" value="C:cytosol"/>
    <property type="evidence" value="ECO:0007669"/>
    <property type="project" value="TreeGrafter"/>
</dbReference>
<dbReference type="GO" id="GO:0003848">
    <property type="term" value="F:2-amino-4-hydroxy-6-hydroxymethyldihydropteridine diphosphokinase activity"/>
    <property type="evidence" value="ECO:0007669"/>
    <property type="project" value="UniProtKB-EC"/>
</dbReference>
<dbReference type="GO" id="GO:0005524">
    <property type="term" value="F:ATP binding"/>
    <property type="evidence" value="ECO:0007669"/>
    <property type="project" value="UniProtKB-KW"/>
</dbReference>
<dbReference type="GO" id="GO:0004156">
    <property type="term" value="F:dihydropteroate synthase activity"/>
    <property type="evidence" value="ECO:0007669"/>
    <property type="project" value="UniProtKB-EC"/>
</dbReference>
<dbReference type="GO" id="GO:0016301">
    <property type="term" value="F:kinase activity"/>
    <property type="evidence" value="ECO:0007669"/>
    <property type="project" value="UniProtKB-KW"/>
</dbReference>
<dbReference type="GO" id="GO:0046872">
    <property type="term" value="F:metal ion binding"/>
    <property type="evidence" value="ECO:0007669"/>
    <property type="project" value="UniProtKB-KW"/>
</dbReference>
<dbReference type="GO" id="GO:0046656">
    <property type="term" value="P:folic acid biosynthetic process"/>
    <property type="evidence" value="ECO:0007669"/>
    <property type="project" value="UniProtKB-KW"/>
</dbReference>
<dbReference type="GO" id="GO:0046654">
    <property type="term" value="P:tetrahydrofolate biosynthetic process"/>
    <property type="evidence" value="ECO:0007669"/>
    <property type="project" value="UniProtKB-UniPathway"/>
</dbReference>
<dbReference type="CDD" id="cd00739">
    <property type="entry name" value="DHPS"/>
    <property type="match status" value="1"/>
</dbReference>
<dbReference type="CDD" id="cd00483">
    <property type="entry name" value="HPPK"/>
    <property type="match status" value="1"/>
</dbReference>
<dbReference type="FunFam" id="3.20.20.20:FF:000015">
    <property type="entry name" value="Probable bifunctional folylpolyglutamate synthase/dihydropteroate synthase"/>
    <property type="match status" value="1"/>
</dbReference>
<dbReference type="Gene3D" id="3.30.70.560">
    <property type="entry name" value="7,8-Dihydro-6-hydroxymethylpterin-pyrophosphokinase HPPK"/>
    <property type="match status" value="1"/>
</dbReference>
<dbReference type="Gene3D" id="3.20.20.20">
    <property type="entry name" value="Dihydropteroate synthase-like"/>
    <property type="match status" value="1"/>
</dbReference>
<dbReference type="InterPro" id="IPR045031">
    <property type="entry name" value="DHP_synth-like"/>
</dbReference>
<dbReference type="InterPro" id="IPR006390">
    <property type="entry name" value="DHP_synth_dom"/>
</dbReference>
<dbReference type="InterPro" id="IPR011005">
    <property type="entry name" value="Dihydropteroate_synth-like_sf"/>
</dbReference>
<dbReference type="InterPro" id="IPR000550">
    <property type="entry name" value="Hppk"/>
</dbReference>
<dbReference type="InterPro" id="IPR035907">
    <property type="entry name" value="Hppk_sf"/>
</dbReference>
<dbReference type="InterPro" id="IPR000489">
    <property type="entry name" value="Pterin-binding_dom"/>
</dbReference>
<dbReference type="NCBIfam" id="TIGR01496">
    <property type="entry name" value="DHPS"/>
    <property type="match status" value="1"/>
</dbReference>
<dbReference type="NCBIfam" id="TIGR01498">
    <property type="entry name" value="folK"/>
    <property type="match status" value="1"/>
</dbReference>
<dbReference type="PANTHER" id="PTHR20941">
    <property type="entry name" value="FOLATE SYNTHESIS PROTEINS"/>
    <property type="match status" value="1"/>
</dbReference>
<dbReference type="PANTHER" id="PTHR20941:SF1">
    <property type="entry name" value="FOLIC ACID SYNTHESIS PROTEIN FOL1"/>
    <property type="match status" value="1"/>
</dbReference>
<dbReference type="Pfam" id="PF01288">
    <property type="entry name" value="HPPK"/>
    <property type="match status" value="1"/>
</dbReference>
<dbReference type="Pfam" id="PF00809">
    <property type="entry name" value="Pterin_bind"/>
    <property type="match status" value="1"/>
</dbReference>
<dbReference type="SUPFAM" id="SSF55083">
    <property type="entry name" value="6-hydroxymethyl-7,8-dihydropterin pyrophosphokinase, HPPK"/>
    <property type="match status" value="1"/>
</dbReference>
<dbReference type="SUPFAM" id="SSF51717">
    <property type="entry name" value="Dihydropteroate synthetase-like"/>
    <property type="match status" value="1"/>
</dbReference>
<dbReference type="PROSITE" id="PS00792">
    <property type="entry name" value="DHPS_1"/>
    <property type="match status" value="1"/>
</dbReference>
<dbReference type="PROSITE" id="PS00793">
    <property type="entry name" value="DHPS_2"/>
    <property type="match status" value="1"/>
</dbReference>
<dbReference type="PROSITE" id="PS00794">
    <property type="entry name" value="HPPK"/>
    <property type="match status" value="1"/>
</dbReference>
<dbReference type="PROSITE" id="PS50972">
    <property type="entry name" value="PTERIN_BINDING"/>
    <property type="match status" value="1"/>
</dbReference>
<name>FOLKP_CHLMU</name>
<sequence length="450" mass="50448">MTTWNFVCLGLGSNLGNRHEYIKRAYESLKKAGIRNLKSSVILETKALLLEGSPKEWDLPYFNCVAIGETQLSPDELVKEIKMIENRLSRDSSLKWGPRSIDIDVLLYGDESYSCCSERCIIPHPRLLERPFLLSMMASLCPYRYFRLRGSPYDGKTFAELAAIYPLTEKDVLGSFAPTTQIMGIVNVTDDSISDTGLFLEAKRAAAHAERLFAEGASIIDLGAQATNPRVRDLGSVEQEWERLEPVLQILAESWKDAKQYPDVSIDTFRPEVIRRAIQVFPIRWINDVSGGSLEMAHLAKDLGLRLLINHSCSLPPRPDCVLSYEESPVTQMLRWGESQLETFAQIGLDTSWQVVFDPGIGFGKTPVQSMQLMEGVAKFKHILKCPVLIGHSRKSCLSLLGRFSSQDRDWETIGCSVALHNQGVDYLRVHQVEGNRRVLAAAAWSGMPV</sequence>
<gene>
    <name type="primary">folKP</name>
    <name type="ordered locus">TC_0903</name>
</gene>
<organism>
    <name type="scientific">Chlamydia muridarum (strain MoPn / Nigg)</name>
    <dbReference type="NCBI Taxonomy" id="243161"/>
    <lineage>
        <taxon>Bacteria</taxon>
        <taxon>Pseudomonadati</taxon>
        <taxon>Chlamydiota</taxon>
        <taxon>Chlamydiia</taxon>
        <taxon>Chlamydiales</taxon>
        <taxon>Chlamydiaceae</taxon>
        <taxon>Chlamydia/Chlamydophila group</taxon>
        <taxon>Chlamydia</taxon>
    </lineage>
</organism>
<proteinExistence type="inferred from homology"/>
<protein>
    <recommendedName>
        <fullName>Folate synthesis bifunctional protein</fullName>
    </recommendedName>
    <domain>
        <recommendedName>
            <fullName>6-hydroxymethyl-7,8-dihydropterin pyrophosphokinase</fullName>
            <shortName>HPPK</shortName>
            <ecNumber>2.7.6.3</ecNumber>
        </recommendedName>
        <alternativeName>
            <fullName>2-amino-4-hydroxy-6-hydroxymethyldihydropteridine pyrophosphokinase</fullName>
        </alternativeName>
        <alternativeName>
            <fullName>7,8-dihydro-6-hydroxymethylpterin-pyrophosphokinase</fullName>
            <shortName>PPPK</shortName>
        </alternativeName>
    </domain>
    <domain>
        <recommendedName>
            <fullName>Dihydropteroate synthase</fullName>
            <shortName>DHPS</shortName>
            <ecNumber>2.5.1.15</ecNumber>
        </recommendedName>
        <alternativeName>
            <fullName>Dihydropteroate pyrophosphorylase</fullName>
        </alternativeName>
    </domain>
</protein>
<comment type="catalytic activity">
    <reaction>
        <text>6-hydroxymethyl-7,8-dihydropterin + ATP = (7,8-dihydropterin-6-yl)methyl diphosphate + AMP + H(+)</text>
        <dbReference type="Rhea" id="RHEA:11412"/>
        <dbReference type="ChEBI" id="CHEBI:15378"/>
        <dbReference type="ChEBI" id="CHEBI:30616"/>
        <dbReference type="ChEBI" id="CHEBI:44841"/>
        <dbReference type="ChEBI" id="CHEBI:72950"/>
        <dbReference type="ChEBI" id="CHEBI:456215"/>
        <dbReference type="EC" id="2.7.6.3"/>
    </reaction>
</comment>
<comment type="catalytic activity">
    <reaction>
        <text>(7,8-dihydropterin-6-yl)methyl diphosphate + 4-aminobenzoate = 7,8-dihydropteroate + diphosphate</text>
        <dbReference type="Rhea" id="RHEA:19949"/>
        <dbReference type="ChEBI" id="CHEBI:17836"/>
        <dbReference type="ChEBI" id="CHEBI:17839"/>
        <dbReference type="ChEBI" id="CHEBI:33019"/>
        <dbReference type="ChEBI" id="CHEBI:72950"/>
        <dbReference type="EC" id="2.5.1.15"/>
    </reaction>
</comment>
<comment type="cofactor">
    <cofactor evidence="1">
        <name>Mg(2+)</name>
        <dbReference type="ChEBI" id="CHEBI:18420"/>
    </cofactor>
</comment>
<comment type="pathway">
    <text>Cofactor biosynthesis; tetrahydrofolate biosynthesis; 2-amino-4-hydroxy-6-hydroxymethyl-7,8-dihydropteridine diphosphate from 7,8-dihydroneopterin triphosphate: step 4/4.</text>
</comment>
<comment type="pathway">
    <text>Cofactor biosynthesis; tetrahydrofolate biosynthesis; 7,8-dihydrofolate from 2-amino-4-hydroxy-6-hydroxymethyl-7,8-dihydropteridine diphosphate and 4-aminobenzoate: step 1/2.</text>
</comment>
<comment type="similarity">
    <text evidence="4">In the C-terminal section; belongs to the DHPS family.</text>
</comment>
<comment type="similarity">
    <text evidence="4">In the N-terminal section; belongs to the HPPK family.</text>
</comment>
<accession>P82602</accession>
<evidence type="ECO:0000250" key="1">
    <source>
        <dbReference type="UniProtKB" id="P0AC13"/>
    </source>
</evidence>
<evidence type="ECO:0000250" key="2">
    <source>
        <dbReference type="UniProtKB" id="P9WND1"/>
    </source>
</evidence>
<evidence type="ECO:0000255" key="3">
    <source>
        <dbReference type="PROSITE-ProRule" id="PRU00334"/>
    </source>
</evidence>
<evidence type="ECO:0000305" key="4"/>